<keyword id="KW-0119">Carbohydrate metabolism</keyword>
<keyword id="KW-0136">Cellulose degradation</keyword>
<keyword id="KW-0325">Glycoprotein</keyword>
<keyword id="KW-0326">Glycosidase</keyword>
<keyword id="KW-0378">Hydrolase</keyword>
<keyword id="KW-0624">Polysaccharide degradation</keyword>
<keyword id="KW-1185">Reference proteome</keyword>
<keyword id="KW-0964">Secreted</keyword>
<keyword id="KW-0732">Signal</keyword>
<name>BGLM_ASPOR</name>
<gene>
    <name type="primary">bglM</name>
    <name type="ORF">AO090012000135</name>
</gene>
<accession>Q2UDK7</accession>
<reference key="1">
    <citation type="journal article" date="2005" name="Nature">
        <title>Genome sequencing and analysis of Aspergillus oryzae.</title>
        <authorList>
            <person name="Machida M."/>
            <person name="Asai K."/>
            <person name="Sano M."/>
            <person name="Tanaka T."/>
            <person name="Kumagai T."/>
            <person name="Terai G."/>
            <person name="Kusumoto K."/>
            <person name="Arima T."/>
            <person name="Akita O."/>
            <person name="Kashiwagi Y."/>
            <person name="Abe K."/>
            <person name="Gomi K."/>
            <person name="Horiuchi H."/>
            <person name="Kitamoto K."/>
            <person name="Kobayashi T."/>
            <person name="Takeuchi M."/>
            <person name="Denning D.W."/>
            <person name="Galagan J.E."/>
            <person name="Nierman W.C."/>
            <person name="Yu J."/>
            <person name="Archer D.B."/>
            <person name="Bennett J.W."/>
            <person name="Bhatnagar D."/>
            <person name="Cleveland T.E."/>
            <person name="Fedorova N.D."/>
            <person name="Gotoh O."/>
            <person name="Horikawa H."/>
            <person name="Hosoyama A."/>
            <person name="Ichinomiya M."/>
            <person name="Igarashi R."/>
            <person name="Iwashita K."/>
            <person name="Juvvadi P.R."/>
            <person name="Kato M."/>
            <person name="Kato Y."/>
            <person name="Kin T."/>
            <person name="Kokubun A."/>
            <person name="Maeda H."/>
            <person name="Maeyama N."/>
            <person name="Maruyama J."/>
            <person name="Nagasaki H."/>
            <person name="Nakajima T."/>
            <person name="Oda K."/>
            <person name="Okada K."/>
            <person name="Paulsen I."/>
            <person name="Sakamoto K."/>
            <person name="Sawano T."/>
            <person name="Takahashi M."/>
            <person name="Takase K."/>
            <person name="Terabayashi Y."/>
            <person name="Wortman J.R."/>
            <person name="Yamada O."/>
            <person name="Yamagata Y."/>
            <person name="Anazawa H."/>
            <person name="Hata Y."/>
            <person name="Koide Y."/>
            <person name="Komori T."/>
            <person name="Koyama Y."/>
            <person name="Minetoki T."/>
            <person name="Suharnan S."/>
            <person name="Tanaka A."/>
            <person name="Isono K."/>
            <person name="Kuhara S."/>
            <person name="Ogasawara N."/>
            <person name="Kikuchi H."/>
        </authorList>
    </citation>
    <scope>NUCLEOTIDE SEQUENCE [LARGE SCALE GENOMIC DNA]</scope>
    <source>
        <strain>ATCC 42149 / RIB 40</strain>
    </source>
</reference>
<comment type="function">
    <text evidence="1">Beta-glucosidases are one of a number of cellulolytic enzymes involved in the degradation of cellulosic biomass. Catalyzes the last step releasing glucose from the inhibitory cellobiose (By similarity).</text>
</comment>
<comment type="catalytic activity">
    <reaction>
        <text>Hydrolysis of terminal, non-reducing beta-D-glucosyl residues with release of beta-D-glucose.</text>
        <dbReference type="EC" id="3.2.1.21"/>
    </reaction>
</comment>
<comment type="pathway">
    <text>Glycan metabolism; cellulose degradation.</text>
</comment>
<comment type="subcellular location">
    <subcellularLocation>
        <location evidence="1">Secreted</location>
    </subcellularLocation>
</comment>
<comment type="similarity">
    <text evidence="3">Belongs to the glycosyl hydrolase 3 family.</text>
</comment>
<dbReference type="EC" id="3.2.1.21"/>
<dbReference type="EMBL" id="BA000052">
    <property type="protein sequence ID" value="BAE60358.1"/>
    <property type="molecule type" value="Genomic_DNA"/>
</dbReference>
<dbReference type="RefSeq" id="XP_001727197.1">
    <property type="nucleotide sequence ID" value="XM_001727145.1"/>
</dbReference>
<dbReference type="SMR" id="Q2UDK7"/>
<dbReference type="STRING" id="510516.Q2UDK7"/>
<dbReference type="CAZy" id="GH3">
    <property type="family name" value="Glycoside Hydrolase Family 3"/>
</dbReference>
<dbReference type="GlyCosmos" id="Q2UDK7">
    <property type="glycosylation" value="10 sites, No reported glycans"/>
</dbReference>
<dbReference type="EnsemblFungi" id="BAE60358">
    <property type="protein sequence ID" value="BAE60358"/>
    <property type="gene ID" value="AO090012000135"/>
</dbReference>
<dbReference type="GeneID" id="5987671"/>
<dbReference type="KEGG" id="aor:AO090012000135"/>
<dbReference type="VEuPathDB" id="FungiDB:AO090012000135"/>
<dbReference type="HOGENOM" id="CLU_004542_2_1_1"/>
<dbReference type="OMA" id="PGLCVSD"/>
<dbReference type="OrthoDB" id="109113at5052"/>
<dbReference type="UniPathway" id="UPA00696"/>
<dbReference type="Proteomes" id="UP000006564">
    <property type="component" value="Chromosome 4"/>
</dbReference>
<dbReference type="GO" id="GO:0005576">
    <property type="term" value="C:extracellular region"/>
    <property type="evidence" value="ECO:0007669"/>
    <property type="project" value="UniProtKB-SubCell"/>
</dbReference>
<dbReference type="GO" id="GO:0008422">
    <property type="term" value="F:beta-glucosidase activity"/>
    <property type="evidence" value="ECO:0007669"/>
    <property type="project" value="UniProtKB-EC"/>
</dbReference>
<dbReference type="GO" id="GO:0030245">
    <property type="term" value="P:cellulose catabolic process"/>
    <property type="evidence" value="ECO:0007669"/>
    <property type="project" value="UniProtKB-UniPathway"/>
</dbReference>
<dbReference type="FunFam" id="2.60.40.10:FF:000757">
    <property type="entry name" value="Beta-glucosidase G"/>
    <property type="match status" value="1"/>
</dbReference>
<dbReference type="FunFam" id="3.20.20.300:FF:000002">
    <property type="entry name" value="Probable beta-glucosidase"/>
    <property type="match status" value="1"/>
</dbReference>
<dbReference type="Gene3D" id="3.40.50.1700">
    <property type="entry name" value="Glycoside hydrolase family 3 C-terminal domain"/>
    <property type="match status" value="1"/>
</dbReference>
<dbReference type="Gene3D" id="3.20.20.300">
    <property type="entry name" value="Glycoside hydrolase, family 3, N-terminal domain"/>
    <property type="match status" value="1"/>
</dbReference>
<dbReference type="Gene3D" id="2.60.40.10">
    <property type="entry name" value="Immunoglobulins"/>
    <property type="match status" value="1"/>
</dbReference>
<dbReference type="InterPro" id="IPR050288">
    <property type="entry name" value="Cellulose_deg_GH3"/>
</dbReference>
<dbReference type="InterPro" id="IPR026891">
    <property type="entry name" value="Fn3-like"/>
</dbReference>
<dbReference type="InterPro" id="IPR002772">
    <property type="entry name" value="Glyco_hydro_3_C"/>
</dbReference>
<dbReference type="InterPro" id="IPR036881">
    <property type="entry name" value="Glyco_hydro_3_C_sf"/>
</dbReference>
<dbReference type="InterPro" id="IPR001764">
    <property type="entry name" value="Glyco_hydro_3_N"/>
</dbReference>
<dbReference type="InterPro" id="IPR036962">
    <property type="entry name" value="Glyco_hydro_3_N_sf"/>
</dbReference>
<dbReference type="InterPro" id="IPR017853">
    <property type="entry name" value="Glycoside_hydrolase_SF"/>
</dbReference>
<dbReference type="InterPro" id="IPR013783">
    <property type="entry name" value="Ig-like_fold"/>
</dbReference>
<dbReference type="PANTHER" id="PTHR42715">
    <property type="entry name" value="BETA-GLUCOSIDASE"/>
    <property type="match status" value="1"/>
</dbReference>
<dbReference type="PANTHER" id="PTHR42715:SF5">
    <property type="entry name" value="BETA-GLUCOSIDASE M-RELATED"/>
    <property type="match status" value="1"/>
</dbReference>
<dbReference type="Pfam" id="PF14310">
    <property type="entry name" value="Fn3-like"/>
    <property type="match status" value="1"/>
</dbReference>
<dbReference type="Pfam" id="PF00933">
    <property type="entry name" value="Glyco_hydro_3"/>
    <property type="match status" value="1"/>
</dbReference>
<dbReference type="Pfam" id="PF01915">
    <property type="entry name" value="Glyco_hydro_3_C"/>
    <property type="match status" value="1"/>
</dbReference>
<dbReference type="PRINTS" id="PR00133">
    <property type="entry name" value="GLHYDRLASE3"/>
</dbReference>
<dbReference type="SMART" id="SM01217">
    <property type="entry name" value="Fn3_like"/>
    <property type="match status" value="1"/>
</dbReference>
<dbReference type="SUPFAM" id="SSF51445">
    <property type="entry name" value="(Trans)glycosidases"/>
    <property type="match status" value="1"/>
</dbReference>
<dbReference type="SUPFAM" id="SSF52279">
    <property type="entry name" value="Beta-D-glucan exohydrolase, C-terminal domain"/>
    <property type="match status" value="1"/>
</dbReference>
<organism>
    <name type="scientific">Aspergillus oryzae (strain ATCC 42149 / RIB 40)</name>
    <name type="common">Yellow koji mold</name>
    <dbReference type="NCBI Taxonomy" id="510516"/>
    <lineage>
        <taxon>Eukaryota</taxon>
        <taxon>Fungi</taxon>
        <taxon>Dikarya</taxon>
        <taxon>Ascomycota</taxon>
        <taxon>Pezizomycotina</taxon>
        <taxon>Eurotiomycetes</taxon>
        <taxon>Eurotiomycetidae</taxon>
        <taxon>Eurotiales</taxon>
        <taxon>Aspergillaceae</taxon>
        <taxon>Aspergillus</taxon>
        <taxon>Aspergillus subgen. Circumdati</taxon>
    </lineage>
</organism>
<proteinExistence type="inferred from homology"/>
<feature type="signal peptide" evidence="2">
    <location>
        <begin position="1"/>
        <end position="19"/>
    </location>
</feature>
<feature type="chain" id="PRO_0000394907" description="Probable beta-glucosidase M">
    <location>
        <begin position="20"/>
        <end position="768"/>
    </location>
</feature>
<feature type="active site" evidence="1">
    <location>
        <position position="287"/>
    </location>
</feature>
<feature type="glycosylation site" description="N-linked (GlcNAc...) asparagine" evidence="2">
    <location>
        <position position="25"/>
    </location>
</feature>
<feature type="glycosylation site" description="N-linked (GlcNAc...) asparagine" evidence="2">
    <location>
        <position position="72"/>
    </location>
</feature>
<feature type="glycosylation site" description="N-linked (GlcNAc...) asparagine" evidence="2">
    <location>
        <position position="259"/>
    </location>
</feature>
<feature type="glycosylation site" description="N-linked (GlcNAc...) asparagine" evidence="2">
    <location>
        <position position="315"/>
    </location>
</feature>
<feature type="glycosylation site" description="N-linked (GlcNAc...) asparagine" evidence="2">
    <location>
        <position position="322"/>
    </location>
</feature>
<feature type="glycosylation site" description="N-linked (GlcNAc...) asparagine" evidence="2">
    <location>
        <position position="394"/>
    </location>
</feature>
<feature type="glycosylation site" description="N-linked (GlcNAc...) asparagine" evidence="2">
    <location>
        <position position="434"/>
    </location>
</feature>
<feature type="glycosylation site" description="N-linked (GlcNAc...) asparagine" evidence="2">
    <location>
        <position position="472"/>
    </location>
</feature>
<feature type="glycosylation site" description="N-linked (GlcNAc...) asparagine" evidence="2">
    <location>
        <position position="543"/>
    </location>
</feature>
<feature type="glycosylation site" description="N-linked (GlcNAc...) asparagine" evidence="2">
    <location>
        <position position="651"/>
    </location>
</feature>
<protein>
    <recommendedName>
        <fullName>Probable beta-glucosidase M</fullName>
        <ecNumber>3.2.1.21</ecNumber>
    </recommendedName>
    <alternativeName>
        <fullName>Beta-D-glucoside glucohydrolase M</fullName>
    </alternativeName>
    <alternativeName>
        <fullName>Cellobiase M</fullName>
    </alternativeName>
    <alternativeName>
        <fullName>Gentiobiase M</fullName>
    </alternativeName>
</protein>
<sequence>MHAIAGLTGLLAGVSLSYAAPTHENITSDAYFYGQSPAVYPSPEGTGSGAWASAYEKAKAFVANLTPEEKVNLTAGTDADNGCSGNIPAIPRLNFPGLCVSDAGNGLRSTDHVNAWSSGIHTGASWNKDLAQKRGLHMGSEYHKKGVNVLLGPVVGPLGRIAEGGRNWEGFSVDPYHSGLLVYETIRGIQAAGVGTSTKHYIANEQETNRNPESTDGIDVAAVSSNIDDKTMHELYLWPFQDVVRAGSVSIMCSYQRINNSYGCQNSKTLNGLLKTELGFQGYVMTDWGAQHGGIASSNAGLDMVMPSSTLWNSNLTDAIANGTMEASRLDDMATRIIASWYQMNQDAGFPSPGVGMPADVYAPHQAIIGKSSDSRKVLLQSAIEGHVLVKNKNNTLPLKSPEMISVFGYDAKGPDSLGFALEWLSYSPAIQPNHTLIVGGGSGGNSPAYISAPLDALQQQVIEDGSSILWNISAQDPEVDPNTDACLVFINSYATEGYDRAGLVDEGSDELVTNVASKCSNTIVTIHNAGIRLVNNWIDHENVTAVIFAHLPGQDSGRALVELLYGRSNPSGKLPYTVAKSADDYGALLHPKLPEGQYGLFPQDDFSEGVYIDYRAFDKQGIEPQFEFGFGLSYTTFDYSGLNIGQVSDNSTSRYPPSAAIQEGGNPHLWDVILRVSVDITNSGPVAGDEVAQLYVGIPNGPVRQLRGFEKVNIPVGQTVTVEFALGRRDLSTWDVVAQEWLLQSGTYQVYVGRSSRDLPLQGEFTI</sequence>
<evidence type="ECO:0000250" key="1"/>
<evidence type="ECO:0000255" key="2"/>
<evidence type="ECO:0000305" key="3"/>